<protein>
    <recommendedName>
        <fullName>ATP-dependent Clp protease ATP-binding subunit ClpC</fullName>
    </recommendedName>
</protein>
<evidence type="ECO:0000250" key="1"/>
<evidence type="ECO:0000255" key="2"/>
<evidence type="ECO:0000255" key="3">
    <source>
        <dbReference type="PROSITE-ProRule" id="PRU00217"/>
    </source>
</evidence>
<evidence type="ECO:0000255" key="4">
    <source>
        <dbReference type="PROSITE-ProRule" id="PRU01251"/>
    </source>
</evidence>
<evidence type="ECO:0000305" key="5"/>
<feature type="chain" id="PRO_0000269691" description="ATP-dependent Clp protease ATP-binding subunit ClpC">
    <location>
        <begin position="1"/>
        <end position="820"/>
    </location>
</feature>
<feature type="domain" description="Clp R" evidence="4">
    <location>
        <begin position="3"/>
        <end position="144"/>
    </location>
</feature>
<feature type="domain" description="UVR" evidence="3">
    <location>
        <begin position="417"/>
        <end position="452"/>
    </location>
</feature>
<feature type="region of interest" description="Repeat 1" evidence="4">
    <location>
        <begin position="6"/>
        <end position="71"/>
    </location>
</feature>
<feature type="region of interest" description="Repeat 2" evidence="4">
    <location>
        <begin position="80"/>
        <end position="144"/>
    </location>
</feature>
<feature type="region of interest" description="I">
    <location>
        <begin position="163"/>
        <end position="410"/>
    </location>
</feature>
<feature type="region of interest" description="II">
    <location>
        <begin position="471"/>
        <end position="662"/>
    </location>
</feature>
<feature type="binding site" evidence="2">
    <location>
        <begin position="208"/>
        <end position="215"/>
    </location>
    <ligand>
        <name>ATP</name>
        <dbReference type="ChEBI" id="CHEBI:30616"/>
    </ligand>
</feature>
<feature type="binding site" evidence="2">
    <location>
        <begin position="545"/>
        <end position="552"/>
    </location>
    <ligand>
        <name>ATP</name>
        <dbReference type="ChEBI" id="CHEBI:30616"/>
    </ligand>
</feature>
<organism>
    <name type="scientific">Staphylococcus saprophyticus subsp. saprophyticus (strain ATCC 15305 / DSM 20229 / NCIMB 8711 / NCTC 7292 / S-41)</name>
    <dbReference type="NCBI Taxonomy" id="342451"/>
    <lineage>
        <taxon>Bacteria</taxon>
        <taxon>Bacillati</taxon>
        <taxon>Bacillota</taxon>
        <taxon>Bacilli</taxon>
        <taxon>Bacillales</taxon>
        <taxon>Staphylococcaceae</taxon>
        <taxon>Staphylococcus</taxon>
    </lineage>
</organism>
<name>CLPC_STAS1</name>
<sequence>MLFGRLTERAQRVLAHAQEEAIRLNHSNIGTEHLLLGLMKEPEGIAAKVLETFEITEEKVVEEVEKLIGHGQEQMGALHYTPRAKKVIELSMDEARKLHHNFVGTEHILLGLIRENEGVAARVFANLDLNITKARAQVVKALGSPEMSNKNAQANKSNNTPTLDSLARDLTVIAKDGTLDPVIGRDKEITRVIEVLSRRTKNNPVLIGEPGVGKTAIAEGLAQAIVNNEVPETLKGKRVMSLDMGTVVAGTKYRGEFEERLKKVMEEIHQAGNVILFIDELHTLVGAGGAEGAIDASNILKPALARGELQCIGATTLDEYRKNIEKDAALERRFQPVQVDEPTVEDTIEILKGLRDRYEAHHRINISDEALVSAAKLSHRYVSDRFLPDKAIDLIDEASSKVRLKSHTTPPNLKEIEQQIEQVKNEKDAAVHAQEFENAANLRDKQTKLEKQYEEANTNWKNTQNGDNTSLSEEDIGEVIAGWTGIPLTKINETESDRLLNLEDTLHNRVIGQKDAVTSISKAVRRARAGLKDPKRPIGSFIFLGPTGVGKTELARALAESMFGEDDAMIRVDMSEFMEKHAVSRLVGAPPGYVGHDDGGQLTEKVRRKPYSVILFDEIEKAHPDVFNILLQVLDDGHLTDTKGRRVDFRNTVIIMTSNVGAQELQDQRFAGFGGATEGQDYESIRKTMMKELKNAFRPEFLNRVDDIIVFHKLSKDELKQIVTMMVNKLTNRLSEQDINISVTEAAKEKIAEEGYDPEYGARPLIRAIQKTVEDNLSELILDGNQIEGKEVKIDHDGKEFKYDITERQDSAKDKETSES</sequence>
<proteinExistence type="inferred from homology"/>
<keyword id="KW-0067">ATP-binding</keyword>
<keyword id="KW-0143">Chaperone</keyword>
<keyword id="KW-0547">Nucleotide-binding</keyword>
<keyword id="KW-1185">Reference proteome</keyword>
<keyword id="KW-0677">Repeat</keyword>
<keyword id="KW-0346">Stress response</keyword>
<comment type="function">
    <text evidence="1">Required for growth at high temperatures, probably by acting as a chaperone during heat shock and targeting heat-denatured proteins for degradation by ClpP.</text>
</comment>
<comment type="similarity">
    <text evidence="5">Belongs to the ClpA/ClpB family. ClpC subfamily.</text>
</comment>
<accession>Q49V34</accession>
<dbReference type="EMBL" id="AP008934">
    <property type="protein sequence ID" value="BAE19376.1"/>
    <property type="molecule type" value="Genomic_DNA"/>
</dbReference>
<dbReference type="RefSeq" id="WP_011303851.1">
    <property type="nucleotide sequence ID" value="NZ_MTGA01000039.1"/>
</dbReference>
<dbReference type="SMR" id="Q49V34"/>
<dbReference type="GeneID" id="3615561"/>
<dbReference type="KEGG" id="ssp:SSP2231"/>
<dbReference type="PATRIC" id="fig|342451.11.peg.2222"/>
<dbReference type="eggNOG" id="COG0542">
    <property type="taxonomic scope" value="Bacteria"/>
</dbReference>
<dbReference type="HOGENOM" id="CLU_005070_4_1_9"/>
<dbReference type="OrthoDB" id="9803641at2"/>
<dbReference type="Proteomes" id="UP000006371">
    <property type="component" value="Chromosome"/>
</dbReference>
<dbReference type="GO" id="GO:0005737">
    <property type="term" value="C:cytoplasm"/>
    <property type="evidence" value="ECO:0007669"/>
    <property type="project" value="TreeGrafter"/>
</dbReference>
<dbReference type="GO" id="GO:0005524">
    <property type="term" value="F:ATP binding"/>
    <property type="evidence" value="ECO:0007669"/>
    <property type="project" value="UniProtKB-KW"/>
</dbReference>
<dbReference type="GO" id="GO:0016887">
    <property type="term" value="F:ATP hydrolysis activity"/>
    <property type="evidence" value="ECO:0007669"/>
    <property type="project" value="InterPro"/>
</dbReference>
<dbReference type="GO" id="GO:0034605">
    <property type="term" value="P:cellular response to heat"/>
    <property type="evidence" value="ECO:0007669"/>
    <property type="project" value="TreeGrafter"/>
</dbReference>
<dbReference type="CDD" id="cd00009">
    <property type="entry name" value="AAA"/>
    <property type="match status" value="1"/>
</dbReference>
<dbReference type="CDD" id="cd19499">
    <property type="entry name" value="RecA-like_ClpB_Hsp104-like"/>
    <property type="match status" value="1"/>
</dbReference>
<dbReference type="FunFam" id="1.10.8.60:FF:000017">
    <property type="entry name" value="ATP-dependent chaperone ClpB"/>
    <property type="match status" value="1"/>
</dbReference>
<dbReference type="FunFam" id="1.10.8.60:FF:000011">
    <property type="entry name" value="ATP-dependent Clp protease ATP-binding subunit"/>
    <property type="match status" value="1"/>
</dbReference>
<dbReference type="FunFam" id="3.40.50.300:FF:000025">
    <property type="entry name" value="ATP-dependent Clp protease subunit"/>
    <property type="match status" value="1"/>
</dbReference>
<dbReference type="FunFam" id="3.40.50.300:FF:000010">
    <property type="entry name" value="Chaperone clpB 1, putative"/>
    <property type="match status" value="1"/>
</dbReference>
<dbReference type="Gene3D" id="1.10.8.60">
    <property type="match status" value="2"/>
</dbReference>
<dbReference type="Gene3D" id="1.10.1780.10">
    <property type="entry name" value="Clp, N-terminal domain"/>
    <property type="match status" value="1"/>
</dbReference>
<dbReference type="Gene3D" id="3.40.50.300">
    <property type="entry name" value="P-loop containing nucleotide triphosphate hydrolases"/>
    <property type="match status" value="2"/>
</dbReference>
<dbReference type="Gene3D" id="4.10.860.10">
    <property type="entry name" value="UVR domain"/>
    <property type="match status" value="1"/>
</dbReference>
<dbReference type="InterPro" id="IPR003593">
    <property type="entry name" value="AAA+_ATPase"/>
</dbReference>
<dbReference type="InterPro" id="IPR003959">
    <property type="entry name" value="ATPase_AAA_core"/>
</dbReference>
<dbReference type="InterPro" id="IPR019489">
    <property type="entry name" value="Clp_ATPase_C"/>
</dbReference>
<dbReference type="InterPro" id="IPR036628">
    <property type="entry name" value="Clp_N_dom_sf"/>
</dbReference>
<dbReference type="InterPro" id="IPR004176">
    <property type="entry name" value="Clp_R_dom"/>
</dbReference>
<dbReference type="InterPro" id="IPR001270">
    <property type="entry name" value="ClpA/B"/>
</dbReference>
<dbReference type="InterPro" id="IPR018368">
    <property type="entry name" value="ClpA/B_CS1"/>
</dbReference>
<dbReference type="InterPro" id="IPR028299">
    <property type="entry name" value="ClpA/B_CS2"/>
</dbReference>
<dbReference type="InterPro" id="IPR041546">
    <property type="entry name" value="ClpA/ClpB_AAA_lid"/>
</dbReference>
<dbReference type="InterPro" id="IPR050130">
    <property type="entry name" value="ClpA_ClpB"/>
</dbReference>
<dbReference type="InterPro" id="IPR027417">
    <property type="entry name" value="P-loop_NTPase"/>
</dbReference>
<dbReference type="InterPro" id="IPR001943">
    <property type="entry name" value="UVR_dom"/>
</dbReference>
<dbReference type="PANTHER" id="PTHR11638">
    <property type="entry name" value="ATP-DEPENDENT CLP PROTEASE"/>
    <property type="match status" value="1"/>
</dbReference>
<dbReference type="PANTHER" id="PTHR11638:SF18">
    <property type="entry name" value="HEAT SHOCK PROTEIN 104"/>
    <property type="match status" value="1"/>
</dbReference>
<dbReference type="Pfam" id="PF00004">
    <property type="entry name" value="AAA"/>
    <property type="match status" value="1"/>
</dbReference>
<dbReference type="Pfam" id="PF07724">
    <property type="entry name" value="AAA_2"/>
    <property type="match status" value="1"/>
</dbReference>
<dbReference type="Pfam" id="PF17871">
    <property type="entry name" value="AAA_lid_9"/>
    <property type="match status" value="1"/>
</dbReference>
<dbReference type="Pfam" id="PF02861">
    <property type="entry name" value="Clp_N"/>
    <property type="match status" value="2"/>
</dbReference>
<dbReference type="Pfam" id="PF10431">
    <property type="entry name" value="ClpB_D2-small"/>
    <property type="match status" value="1"/>
</dbReference>
<dbReference type="PRINTS" id="PR00300">
    <property type="entry name" value="CLPPROTEASEA"/>
</dbReference>
<dbReference type="SMART" id="SM00382">
    <property type="entry name" value="AAA"/>
    <property type="match status" value="2"/>
</dbReference>
<dbReference type="SMART" id="SM01086">
    <property type="entry name" value="ClpB_D2-small"/>
    <property type="match status" value="1"/>
</dbReference>
<dbReference type="SUPFAM" id="SSF81923">
    <property type="entry name" value="Double Clp-N motif"/>
    <property type="match status" value="1"/>
</dbReference>
<dbReference type="SUPFAM" id="SSF52540">
    <property type="entry name" value="P-loop containing nucleoside triphosphate hydrolases"/>
    <property type="match status" value="2"/>
</dbReference>
<dbReference type="PROSITE" id="PS51903">
    <property type="entry name" value="CLP_R"/>
    <property type="match status" value="1"/>
</dbReference>
<dbReference type="PROSITE" id="PS00870">
    <property type="entry name" value="CLPAB_1"/>
    <property type="match status" value="1"/>
</dbReference>
<dbReference type="PROSITE" id="PS00871">
    <property type="entry name" value="CLPAB_2"/>
    <property type="match status" value="1"/>
</dbReference>
<dbReference type="PROSITE" id="PS50151">
    <property type="entry name" value="UVR"/>
    <property type="match status" value="1"/>
</dbReference>
<gene>
    <name type="primary">clpC</name>
    <name type="ordered locus">SSP2231</name>
</gene>
<reference key="1">
    <citation type="journal article" date="2005" name="Proc. Natl. Acad. Sci. U.S.A.">
        <title>Whole genome sequence of Staphylococcus saprophyticus reveals the pathogenesis of uncomplicated urinary tract infection.</title>
        <authorList>
            <person name="Kuroda M."/>
            <person name="Yamashita A."/>
            <person name="Hirakawa H."/>
            <person name="Kumano M."/>
            <person name="Morikawa K."/>
            <person name="Higashide M."/>
            <person name="Maruyama A."/>
            <person name="Inose Y."/>
            <person name="Matoba K."/>
            <person name="Toh H."/>
            <person name="Kuhara S."/>
            <person name="Hattori M."/>
            <person name="Ohta T."/>
        </authorList>
    </citation>
    <scope>NUCLEOTIDE SEQUENCE [LARGE SCALE GENOMIC DNA]</scope>
    <source>
        <strain>ATCC 15305 / DSM 20229 / NCIMB 8711 / NCTC 7292 / S-41</strain>
    </source>
</reference>